<proteinExistence type="inferred from homology"/>
<sequence length="92" mass="10285">MLTINSDAKLKDLLEFPCSFTYKVMGYAKPELPEKVLEVIQRHAPGDYSPAVKPSAKGNYHSVSINITATSIEQVETLYKELGEIDIVRMVL</sequence>
<feature type="chain" id="PRO_0000209317" description="UPF0250 protein VV0902">
    <location>
        <begin position="1"/>
        <end position="92"/>
    </location>
</feature>
<organism>
    <name type="scientific">Vibrio vulnificus (strain YJ016)</name>
    <dbReference type="NCBI Taxonomy" id="196600"/>
    <lineage>
        <taxon>Bacteria</taxon>
        <taxon>Pseudomonadati</taxon>
        <taxon>Pseudomonadota</taxon>
        <taxon>Gammaproteobacteria</taxon>
        <taxon>Vibrionales</taxon>
        <taxon>Vibrionaceae</taxon>
        <taxon>Vibrio</taxon>
    </lineage>
</organism>
<evidence type="ECO:0000255" key="1">
    <source>
        <dbReference type="HAMAP-Rule" id="MF_00659"/>
    </source>
</evidence>
<gene>
    <name type="ordered locus">VV0902</name>
</gene>
<reference key="1">
    <citation type="journal article" date="2003" name="Genome Res.">
        <title>Comparative genome analysis of Vibrio vulnificus, a marine pathogen.</title>
        <authorList>
            <person name="Chen C.-Y."/>
            <person name="Wu K.-M."/>
            <person name="Chang Y.-C."/>
            <person name="Chang C.-H."/>
            <person name="Tsai H.-C."/>
            <person name="Liao T.-L."/>
            <person name="Liu Y.-M."/>
            <person name="Chen H.-J."/>
            <person name="Shen A.B.-T."/>
            <person name="Li J.-C."/>
            <person name="Su T.-L."/>
            <person name="Shao C.-P."/>
            <person name="Lee C.-T."/>
            <person name="Hor L.-I."/>
            <person name="Tsai S.-F."/>
        </authorList>
    </citation>
    <scope>NUCLEOTIDE SEQUENCE [LARGE SCALE GENOMIC DNA]</scope>
    <source>
        <strain>YJ016</strain>
    </source>
</reference>
<comment type="similarity">
    <text evidence="1">Belongs to the UPF0250 family.</text>
</comment>
<accession>Q7MN15</accession>
<dbReference type="EMBL" id="BA000037">
    <property type="protein sequence ID" value="BAC93666.1"/>
    <property type="molecule type" value="Genomic_DNA"/>
</dbReference>
<dbReference type="SMR" id="Q7MN15"/>
<dbReference type="STRING" id="672.VV93_v1c08390"/>
<dbReference type="KEGG" id="vvy:VV0902"/>
<dbReference type="eggNOG" id="COG2921">
    <property type="taxonomic scope" value="Bacteria"/>
</dbReference>
<dbReference type="HOGENOM" id="CLU_161438_2_1_6"/>
<dbReference type="Proteomes" id="UP000002675">
    <property type="component" value="Chromosome I"/>
</dbReference>
<dbReference type="GO" id="GO:0005829">
    <property type="term" value="C:cytosol"/>
    <property type="evidence" value="ECO:0007669"/>
    <property type="project" value="TreeGrafter"/>
</dbReference>
<dbReference type="FunFam" id="3.30.70.260:FF:000002">
    <property type="entry name" value="UPF0250 protein YbeD"/>
    <property type="match status" value="1"/>
</dbReference>
<dbReference type="Gene3D" id="3.30.70.260">
    <property type="match status" value="1"/>
</dbReference>
<dbReference type="HAMAP" id="MF_00659">
    <property type="entry name" value="UPF0250"/>
    <property type="match status" value="1"/>
</dbReference>
<dbReference type="InterPro" id="IPR007454">
    <property type="entry name" value="UPF0250_YbeD-like"/>
</dbReference>
<dbReference type="InterPro" id="IPR027471">
    <property type="entry name" value="YbeD-like_sf"/>
</dbReference>
<dbReference type="NCBIfam" id="NF003447">
    <property type="entry name" value="PRK04998.1"/>
    <property type="match status" value="1"/>
</dbReference>
<dbReference type="PANTHER" id="PTHR38036">
    <property type="entry name" value="UPF0250 PROTEIN YBED"/>
    <property type="match status" value="1"/>
</dbReference>
<dbReference type="PANTHER" id="PTHR38036:SF1">
    <property type="entry name" value="UPF0250 PROTEIN YBED"/>
    <property type="match status" value="1"/>
</dbReference>
<dbReference type="Pfam" id="PF04359">
    <property type="entry name" value="DUF493"/>
    <property type="match status" value="1"/>
</dbReference>
<dbReference type="SUPFAM" id="SSF117991">
    <property type="entry name" value="YbeD/HP0495-like"/>
    <property type="match status" value="1"/>
</dbReference>
<protein>
    <recommendedName>
        <fullName evidence="1">UPF0250 protein VV0902</fullName>
    </recommendedName>
</protein>
<name>Y902_VIBVY</name>